<organism>
    <name type="scientific">Vibrio atlanticus (strain LGP32)</name>
    <name type="common">Vibrio splendidus (strain Mel32)</name>
    <dbReference type="NCBI Taxonomy" id="575788"/>
    <lineage>
        <taxon>Bacteria</taxon>
        <taxon>Pseudomonadati</taxon>
        <taxon>Pseudomonadota</taxon>
        <taxon>Gammaproteobacteria</taxon>
        <taxon>Vibrionales</taxon>
        <taxon>Vibrionaceae</taxon>
        <taxon>Vibrio</taxon>
    </lineage>
</organism>
<name>RL36_VIBA3</name>
<gene>
    <name evidence="1" type="primary">rpmJ</name>
    <name type="ordered locus">VS_2810.1</name>
</gene>
<protein>
    <recommendedName>
        <fullName evidence="1">Large ribosomal subunit protein bL36</fullName>
    </recommendedName>
    <alternativeName>
        <fullName evidence="2">50S ribosomal protein L36</fullName>
    </alternativeName>
</protein>
<accession>B7VLD6</accession>
<evidence type="ECO:0000255" key="1">
    <source>
        <dbReference type="HAMAP-Rule" id="MF_00251"/>
    </source>
</evidence>
<evidence type="ECO:0000305" key="2"/>
<dbReference type="EMBL" id="FM954972">
    <property type="protein sequence ID" value="CAV20101.1"/>
    <property type="molecule type" value="Genomic_DNA"/>
</dbReference>
<dbReference type="SMR" id="B7VLD6"/>
<dbReference type="STRING" id="575788.VS_2810.1"/>
<dbReference type="KEGG" id="vsp:VS_2810.1"/>
<dbReference type="eggNOG" id="COG0257">
    <property type="taxonomic scope" value="Bacteria"/>
</dbReference>
<dbReference type="HOGENOM" id="CLU_135723_6_2_6"/>
<dbReference type="Proteomes" id="UP000009100">
    <property type="component" value="Chromosome 1"/>
</dbReference>
<dbReference type="GO" id="GO:0005737">
    <property type="term" value="C:cytoplasm"/>
    <property type="evidence" value="ECO:0007669"/>
    <property type="project" value="UniProtKB-ARBA"/>
</dbReference>
<dbReference type="GO" id="GO:1990904">
    <property type="term" value="C:ribonucleoprotein complex"/>
    <property type="evidence" value="ECO:0007669"/>
    <property type="project" value="UniProtKB-KW"/>
</dbReference>
<dbReference type="GO" id="GO:0005840">
    <property type="term" value="C:ribosome"/>
    <property type="evidence" value="ECO:0007669"/>
    <property type="project" value="UniProtKB-KW"/>
</dbReference>
<dbReference type="GO" id="GO:0003735">
    <property type="term" value="F:structural constituent of ribosome"/>
    <property type="evidence" value="ECO:0007669"/>
    <property type="project" value="InterPro"/>
</dbReference>
<dbReference type="GO" id="GO:0006412">
    <property type="term" value="P:translation"/>
    <property type="evidence" value="ECO:0007669"/>
    <property type="project" value="UniProtKB-UniRule"/>
</dbReference>
<dbReference type="HAMAP" id="MF_00251">
    <property type="entry name" value="Ribosomal_bL36"/>
    <property type="match status" value="1"/>
</dbReference>
<dbReference type="InterPro" id="IPR000473">
    <property type="entry name" value="Ribosomal_bL36"/>
</dbReference>
<dbReference type="InterPro" id="IPR035977">
    <property type="entry name" value="Ribosomal_bL36_sp"/>
</dbReference>
<dbReference type="NCBIfam" id="TIGR01022">
    <property type="entry name" value="rpmJ_bact"/>
    <property type="match status" value="1"/>
</dbReference>
<dbReference type="PANTHER" id="PTHR42888">
    <property type="entry name" value="50S RIBOSOMAL PROTEIN L36, CHLOROPLASTIC"/>
    <property type="match status" value="1"/>
</dbReference>
<dbReference type="PANTHER" id="PTHR42888:SF1">
    <property type="entry name" value="LARGE RIBOSOMAL SUBUNIT PROTEIN BL36C"/>
    <property type="match status" value="1"/>
</dbReference>
<dbReference type="Pfam" id="PF00444">
    <property type="entry name" value="Ribosomal_L36"/>
    <property type="match status" value="1"/>
</dbReference>
<dbReference type="SUPFAM" id="SSF57840">
    <property type="entry name" value="Ribosomal protein L36"/>
    <property type="match status" value="1"/>
</dbReference>
<dbReference type="PROSITE" id="PS00828">
    <property type="entry name" value="RIBOSOMAL_L36"/>
    <property type="match status" value="1"/>
</dbReference>
<sequence length="37" mass="4278">MKVRASVKKICRNCKVIKRNGVVRVICSEPKHKQRQG</sequence>
<keyword id="KW-0687">Ribonucleoprotein</keyword>
<keyword id="KW-0689">Ribosomal protein</keyword>
<reference key="1">
    <citation type="submission" date="2009-02" db="EMBL/GenBank/DDBJ databases">
        <title>Vibrio splendidus str. LGP32 complete genome.</title>
        <authorList>
            <person name="Mazel D."/>
            <person name="Le Roux F."/>
        </authorList>
    </citation>
    <scope>NUCLEOTIDE SEQUENCE [LARGE SCALE GENOMIC DNA]</scope>
    <source>
        <strain>LGP32</strain>
    </source>
</reference>
<comment type="similarity">
    <text evidence="1">Belongs to the bacterial ribosomal protein bL36 family.</text>
</comment>
<feature type="chain" id="PRO_1000125510" description="Large ribosomal subunit protein bL36">
    <location>
        <begin position="1"/>
        <end position="37"/>
    </location>
</feature>
<proteinExistence type="inferred from homology"/>